<sequence>MKIRASVRKICEKCRLIRRRGRIIVICSNPRHKQRQG</sequence>
<gene>
    <name evidence="1" type="primary">rpl36</name>
</gene>
<geneLocation type="chloroplast"/>
<dbReference type="EMBL" id="AP009373">
    <property type="protein sequence ID" value="BAF50408.1"/>
    <property type="molecule type" value="Genomic_DNA"/>
</dbReference>
<dbReference type="RefSeq" id="YP_001123584.1">
    <property type="nucleotide sequence ID" value="NC_009272.1"/>
</dbReference>
<dbReference type="SMR" id="A4QL53"/>
<dbReference type="GeneID" id="4964719"/>
<dbReference type="GO" id="GO:0009507">
    <property type="term" value="C:chloroplast"/>
    <property type="evidence" value="ECO:0007669"/>
    <property type="project" value="UniProtKB-SubCell"/>
</dbReference>
<dbReference type="GO" id="GO:1990904">
    <property type="term" value="C:ribonucleoprotein complex"/>
    <property type="evidence" value="ECO:0007669"/>
    <property type="project" value="UniProtKB-KW"/>
</dbReference>
<dbReference type="GO" id="GO:0005840">
    <property type="term" value="C:ribosome"/>
    <property type="evidence" value="ECO:0007669"/>
    <property type="project" value="UniProtKB-KW"/>
</dbReference>
<dbReference type="GO" id="GO:0003735">
    <property type="term" value="F:structural constituent of ribosome"/>
    <property type="evidence" value="ECO:0007669"/>
    <property type="project" value="InterPro"/>
</dbReference>
<dbReference type="GO" id="GO:0006412">
    <property type="term" value="P:translation"/>
    <property type="evidence" value="ECO:0007669"/>
    <property type="project" value="UniProtKB-UniRule"/>
</dbReference>
<dbReference type="HAMAP" id="MF_00251">
    <property type="entry name" value="Ribosomal_bL36"/>
    <property type="match status" value="1"/>
</dbReference>
<dbReference type="InterPro" id="IPR000473">
    <property type="entry name" value="Ribosomal_bL36"/>
</dbReference>
<dbReference type="InterPro" id="IPR035977">
    <property type="entry name" value="Ribosomal_bL36_sp"/>
</dbReference>
<dbReference type="NCBIfam" id="TIGR01022">
    <property type="entry name" value="rpmJ_bact"/>
    <property type="match status" value="1"/>
</dbReference>
<dbReference type="PANTHER" id="PTHR42888">
    <property type="entry name" value="50S RIBOSOMAL PROTEIN L36, CHLOROPLASTIC"/>
    <property type="match status" value="1"/>
</dbReference>
<dbReference type="PANTHER" id="PTHR42888:SF1">
    <property type="entry name" value="LARGE RIBOSOMAL SUBUNIT PROTEIN BL36C"/>
    <property type="match status" value="1"/>
</dbReference>
<dbReference type="Pfam" id="PF00444">
    <property type="entry name" value="Ribosomal_L36"/>
    <property type="match status" value="1"/>
</dbReference>
<dbReference type="SUPFAM" id="SSF57840">
    <property type="entry name" value="Ribosomal protein L36"/>
    <property type="match status" value="1"/>
</dbReference>
<dbReference type="PROSITE" id="PS00828">
    <property type="entry name" value="RIBOSOMAL_L36"/>
    <property type="match status" value="1"/>
</dbReference>
<reference key="1">
    <citation type="submission" date="2007-03" db="EMBL/GenBank/DDBJ databases">
        <title>Sequencing analysis of Draba nemoroza chloroplast DNA.</title>
        <authorList>
            <person name="Hosouchi T."/>
            <person name="Tsuruoka H."/>
            <person name="Kotani H."/>
        </authorList>
    </citation>
    <scope>NUCLEOTIDE SEQUENCE [LARGE SCALE GENOMIC DNA]</scope>
</reference>
<proteinExistence type="inferred from homology"/>
<organism>
    <name type="scientific">Draba nemorosa</name>
    <name type="common">Woodland whitlowgrass</name>
    <dbReference type="NCBI Taxonomy" id="171822"/>
    <lineage>
        <taxon>Eukaryota</taxon>
        <taxon>Viridiplantae</taxon>
        <taxon>Streptophyta</taxon>
        <taxon>Embryophyta</taxon>
        <taxon>Tracheophyta</taxon>
        <taxon>Spermatophyta</taxon>
        <taxon>Magnoliopsida</taxon>
        <taxon>eudicotyledons</taxon>
        <taxon>Gunneridae</taxon>
        <taxon>Pentapetalae</taxon>
        <taxon>rosids</taxon>
        <taxon>malvids</taxon>
        <taxon>Brassicales</taxon>
        <taxon>Brassicaceae</taxon>
        <taxon>Arabideae</taxon>
        <taxon>Draba</taxon>
    </lineage>
</organism>
<evidence type="ECO:0000255" key="1">
    <source>
        <dbReference type="HAMAP-Rule" id="MF_00251"/>
    </source>
</evidence>
<evidence type="ECO:0000305" key="2"/>
<accession>A4QL53</accession>
<keyword id="KW-0150">Chloroplast</keyword>
<keyword id="KW-0934">Plastid</keyword>
<keyword id="KW-0687">Ribonucleoprotein</keyword>
<keyword id="KW-0689">Ribosomal protein</keyword>
<feature type="chain" id="PRO_0000344759" description="Large ribosomal subunit protein bL36c">
    <location>
        <begin position="1"/>
        <end position="37"/>
    </location>
</feature>
<comment type="subcellular location">
    <subcellularLocation>
        <location>Plastid</location>
        <location>Chloroplast</location>
    </subcellularLocation>
</comment>
<comment type="similarity">
    <text evidence="1">Belongs to the bacterial ribosomal protein bL36 family.</text>
</comment>
<protein>
    <recommendedName>
        <fullName evidence="1">Large ribosomal subunit protein bL36c</fullName>
    </recommendedName>
    <alternativeName>
        <fullName evidence="2">50S ribosomal protein L36, chloroplastic</fullName>
    </alternativeName>
</protein>
<name>RK36_DRANE</name>